<comment type="function">
    <text evidence="1">Key component of the proton channel; it plays a direct role in the translocation of protons across the membrane.</text>
</comment>
<comment type="subunit">
    <text evidence="1">F-type ATPases have 2 components, CF(1) - the catalytic core - and CF(0) - the membrane proton channel. CF(1) has five subunits: alpha(3), beta(3), gamma(1), delta(1), epsilon(1). CF(0) has three main subunits: a(1), b(2) and c(9-12). The alpha and beta chains form an alternating ring which encloses part of the gamma chain. CF(1) is attached to CF(0) by a central stalk formed by the gamma and epsilon chains, while a peripheral stalk is formed by the delta and b chains.</text>
</comment>
<comment type="subcellular location">
    <subcellularLocation>
        <location evidence="1">Cell inner membrane</location>
        <topology evidence="1">Multi-pass membrane protein</topology>
    </subcellularLocation>
</comment>
<comment type="similarity">
    <text evidence="1">Belongs to the ATPase A chain family.</text>
</comment>
<evidence type="ECO:0000255" key="1">
    <source>
        <dbReference type="HAMAP-Rule" id="MF_01393"/>
    </source>
</evidence>
<name>ATP6_BRUO2</name>
<reference key="1">
    <citation type="journal article" date="2009" name="PLoS ONE">
        <title>Genome degradation in Brucella ovis corresponds with narrowing of its host range and tissue tropism.</title>
        <authorList>
            <person name="Tsolis R.M."/>
            <person name="Seshadri R."/>
            <person name="Santos R.L."/>
            <person name="Sangari F.J."/>
            <person name="Lobo J.M."/>
            <person name="de Jong M.F."/>
            <person name="Ren Q."/>
            <person name="Myers G."/>
            <person name="Brinkac L.M."/>
            <person name="Nelson W.C."/>
            <person name="Deboy R.T."/>
            <person name="Angiuoli S."/>
            <person name="Khouri H."/>
            <person name="Dimitrov G."/>
            <person name="Robinson J.R."/>
            <person name="Mulligan S."/>
            <person name="Walker R.L."/>
            <person name="Elzer P.E."/>
            <person name="Hassan K.A."/>
            <person name="Paulsen I.T."/>
        </authorList>
    </citation>
    <scope>NUCLEOTIDE SEQUENCE [LARGE SCALE GENOMIC DNA]</scope>
    <source>
        <strain>ATCC 25840 / 63/290 / NCTC 10512</strain>
    </source>
</reference>
<protein>
    <recommendedName>
        <fullName evidence="1">ATP synthase subunit a</fullName>
    </recommendedName>
    <alternativeName>
        <fullName evidence="1">ATP synthase F0 sector subunit a</fullName>
    </alternativeName>
    <alternativeName>
        <fullName evidence="1">F-ATPase subunit 6</fullName>
    </alternativeName>
</protein>
<gene>
    <name evidence="1" type="primary">atpB</name>
    <name type="ordered locus">BOV_0394</name>
</gene>
<proteinExistence type="inferred from homology"/>
<accession>A5VNW2</accession>
<organism>
    <name type="scientific">Brucella ovis (strain ATCC 25840 / 63/290 / NCTC 10512)</name>
    <dbReference type="NCBI Taxonomy" id="444178"/>
    <lineage>
        <taxon>Bacteria</taxon>
        <taxon>Pseudomonadati</taxon>
        <taxon>Pseudomonadota</taxon>
        <taxon>Alphaproteobacteria</taxon>
        <taxon>Hyphomicrobiales</taxon>
        <taxon>Brucellaceae</taxon>
        <taxon>Brucella/Ochrobactrum group</taxon>
        <taxon>Brucella</taxon>
    </lineage>
</organism>
<sequence length="249" mass="27009">MANDPIHQFQVSRWIPIDVGGVDLSFTNVSAFMVATVVLASGFLYLTSSGRGLIPTRLQSVSEMAYEFVATSLRDSAGSKGMKFFPFVFSLFMFVLVANFIGLFPYFYTVTSQIIVTFALSLLVIGTVIFYGFFKHGFGFLKLFVPSGVPGIIVPLVVLIEIISFLSRPISLSVRLFANMLAGHITLKVFAGFVVSLSSLGALGIGGTVLPLLMTVAITALEFLVAFLQAYVFTVLTCMYINDAVHPGH</sequence>
<keyword id="KW-0066">ATP synthesis</keyword>
<keyword id="KW-0997">Cell inner membrane</keyword>
<keyword id="KW-1003">Cell membrane</keyword>
<keyword id="KW-0138">CF(0)</keyword>
<keyword id="KW-0375">Hydrogen ion transport</keyword>
<keyword id="KW-0406">Ion transport</keyword>
<keyword id="KW-0472">Membrane</keyword>
<keyword id="KW-0812">Transmembrane</keyword>
<keyword id="KW-1133">Transmembrane helix</keyword>
<keyword id="KW-0813">Transport</keyword>
<dbReference type="EMBL" id="CP000708">
    <property type="protein sequence ID" value="ABQ60528.1"/>
    <property type="molecule type" value="Genomic_DNA"/>
</dbReference>
<dbReference type="RefSeq" id="WP_005978302.1">
    <property type="nucleotide sequence ID" value="NC_009505.1"/>
</dbReference>
<dbReference type="SMR" id="A5VNW2"/>
<dbReference type="GeneID" id="45123875"/>
<dbReference type="KEGG" id="bov:BOV_0394"/>
<dbReference type="HOGENOM" id="CLU_041018_0_2_5"/>
<dbReference type="PhylomeDB" id="A5VNW2"/>
<dbReference type="Proteomes" id="UP000006383">
    <property type="component" value="Chromosome I"/>
</dbReference>
<dbReference type="GO" id="GO:0005886">
    <property type="term" value="C:plasma membrane"/>
    <property type="evidence" value="ECO:0007669"/>
    <property type="project" value="UniProtKB-SubCell"/>
</dbReference>
<dbReference type="GO" id="GO:0045259">
    <property type="term" value="C:proton-transporting ATP synthase complex"/>
    <property type="evidence" value="ECO:0007669"/>
    <property type="project" value="UniProtKB-KW"/>
</dbReference>
<dbReference type="GO" id="GO:0046933">
    <property type="term" value="F:proton-transporting ATP synthase activity, rotational mechanism"/>
    <property type="evidence" value="ECO:0007669"/>
    <property type="project" value="UniProtKB-UniRule"/>
</dbReference>
<dbReference type="CDD" id="cd00310">
    <property type="entry name" value="ATP-synt_Fo_a_6"/>
    <property type="match status" value="1"/>
</dbReference>
<dbReference type="FunFam" id="1.20.120.220:FF:000003">
    <property type="entry name" value="ATP synthase subunit a"/>
    <property type="match status" value="1"/>
</dbReference>
<dbReference type="Gene3D" id="1.20.120.220">
    <property type="entry name" value="ATP synthase, F0 complex, subunit A"/>
    <property type="match status" value="1"/>
</dbReference>
<dbReference type="HAMAP" id="MF_01393">
    <property type="entry name" value="ATP_synth_a_bact"/>
    <property type="match status" value="1"/>
</dbReference>
<dbReference type="InterPro" id="IPR000568">
    <property type="entry name" value="ATP_synth_F0_asu"/>
</dbReference>
<dbReference type="InterPro" id="IPR023011">
    <property type="entry name" value="ATP_synth_F0_asu_AS"/>
</dbReference>
<dbReference type="InterPro" id="IPR045083">
    <property type="entry name" value="ATP_synth_F0_asu_bact/mt"/>
</dbReference>
<dbReference type="InterPro" id="IPR035908">
    <property type="entry name" value="F0_ATP_A_sf"/>
</dbReference>
<dbReference type="NCBIfam" id="TIGR01131">
    <property type="entry name" value="ATP_synt_6_or_A"/>
    <property type="match status" value="1"/>
</dbReference>
<dbReference type="NCBIfam" id="NF004482">
    <property type="entry name" value="PRK05815.2-4"/>
    <property type="match status" value="1"/>
</dbReference>
<dbReference type="PANTHER" id="PTHR11410">
    <property type="entry name" value="ATP SYNTHASE SUBUNIT A"/>
    <property type="match status" value="1"/>
</dbReference>
<dbReference type="PANTHER" id="PTHR11410:SF0">
    <property type="entry name" value="ATP SYNTHASE SUBUNIT A"/>
    <property type="match status" value="1"/>
</dbReference>
<dbReference type="Pfam" id="PF00119">
    <property type="entry name" value="ATP-synt_A"/>
    <property type="match status" value="1"/>
</dbReference>
<dbReference type="PRINTS" id="PR00123">
    <property type="entry name" value="ATPASEA"/>
</dbReference>
<dbReference type="SUPFAM" id="SSF81336">
    <property type="entry name" value="F1F0 ATP synthase subunit A"/>
    <property type="match status" value="1"/>
</dbReference>
<dbReference type="PROSITE" id="PS00449">
    <property type="entry name" value="ATPASE_A"/>
    <property type="match status" value="1"/>
</dbReference>
<feature type="chain" id="PRO_0000362257" description="ATP synthase subunit a">
    <location>
        <begin position="1"/>
        <end position="249"/>
    </location>
</feature>
<feature type="transmembrane region" description="Helical" evidence="1">
    <location>
        <begin position="26"/>
        <end position="46"/>
    </location>
</feature>
<feature type="transmembrane region" description="Helical" evidence="1">
    <location>
        <begin position="84"/>
        <end position="104"/>
    </location>
</feature>
<feature type="transmembrane region" description="Helical" evidence="1">
    <location>
        <begin position="114"/>
        <end position="134"/>
    </location>
</feature>
<feature type="transmembrane region" description="Helical" evidence="1">
    <location>
        <begin position="143"/>
        <end position="163"/>
    </location>
</feature>
<feature type="transmembrane region" description="Helical" evidence="1">
    <location>
        <begin position="185"/>
        <end position="205"/>
    </location>
</feature>
<feature type="transmembrane region" description="Helical" evidence="1">
    <location>
        <begin position="208"/>
        <end position="228"/>
    </location>
</feature>